<dbReference type="EC" id="3.4.24.-" evidence="1"/>
<dbReference type="EMBL" id="AP006840">
    <property type="protein sequence ID" value="BAD41526.1"/>
    <property type="molecule type" value="Genomic_DNA"/>
</dbReference>
<dbReference type="SMR" id="Q67LC0"/>
<dbReference type="STRING" id="292459.STH2541"/>
<dbReference type="KEGG" id="sth:STH2541"/>
<dbReference type="eggNOG" id="COG0465">
    <property type="taxonomic scope" value="Bacteria"/>
</dbReference>
<dbReference type="HOGENOM" id="CLU_000688_16_2_9"/>
<dbReference type="Proteomes" id="UP000000417">
    <property type="component" value="Chromosome"/>
</dbReference>
<dbReference type="GO" id="GO:0005886">
    <property type="term" value="C:plasma membrane"/>
    <property type="evidence" value="ECO:0007669"/>
    <property type="project" value="UniProtKB-SubCell"/>
</dbReference>
<dbReference type="GO" id="GO:0005524">
    <property type="term" value="F:ATP binding"/>
    <property type="evidence" value="ECO:0007669"/>
    <property type="project" value="UniProtKB-UniRule"/>
</dbReference>
<dbReference type="GO" id="GO:0016887">
    <property type="term" value="F:ATP hydrolysis activity"/>
    <property type="evidence" value="ECO:0007669"/>
    <property type="project" value="UniProtKB-UniRule"/>
</dbReference>
<dbReference type="GO" id="GO:0004176">
    <property type="term" value="F:ATP-dependent peptidase activity"/>
    <property type="evidence" value="ECO:0007669"/>
    <property type="project" value="InterPro"/>
</dbReference>
<dbReference type="GO" id="GO:0004222">
    <property type="term" value="F:metalloendopeptidase activity"/>
    <property type="evidence" value="ECO:0007669"/>
    <property type="project" value="InterPro"/>
</dbReference>
<dbReference type="GO" id="GO:0008270">
    <property type="term" value="F:zinc ion binding"/>
    <property type="evidence" value="ECO:0007669"/>
    <property type="project" value="UniProtKB-UniRule"/>
</dbReference>
<dbReference type="GO" id="GO:0030163">
    <property type="term" value="P:protein catabolic process"/>
    <property type="evidence" value="ECO:0007669"/>
    <property type="project" value="UniProtKB-UniRule"/>
</dbReference>
<dbReference type="GO" id="GO:0006508">
    <property type="term" value="P:proteolysis"/>
    <property type="evidence" value="ECO:0007669"/>
    <property type="project" value="UniProtKB-KW"/>
</dbReference>
<dbReference type="CDD" id="cd19501">
    <property type="entry name" value="RecA-like_FtsH"/>
    <property type="match status" value="1"/>
</dbReference>
<dbReference type="FunFam" id="1.10.8.60:FF:000001">
    <property type="entry name" value="ATP-dependent zinc metalloprotease FtsH"/>
    <property type="match status" value="1"/>
</dbReference>
<dbReference type="FunFam" id="3.40.50.300:FF:000001">
    <property type="entry name" value="ATP-dependent zinc metalloprotease FtsH"/>
    <property type="match status" value="1"/>
</dbReference>
<dbReference type="Gene3D" id="1.10.8.60">
    <property type="match status" value="1"/>
</dbReference>
<dbReference type="Gene3D" id="3.30.720.210">
    <property type="match status" value="1"/>
</dbReference>
<dbReference type="Gene3D" id="3.40.50.300">
    <property type="entry name" value="P-loop containing nucleotide triphosphate hydrolases"/>
    <property type="match status" value="1"/>
</dbReference>
<dbReference type="Gene3D" id="1.20.58.760">
    <property type="entry name" value="Peptidase M41"/>
    <property type="match status" value="1"/>
</dbReference>
<dbReference type="HAMAP" id="MF_01458">
    <property type="entry name" value="FtsH"/>
    <property type="match status" value="1"/>
</dbReference>
<dbReference type="InterPro" id="IPR003593">
    <property type="entry name" value="AAA+_ATPase"/>
</dbReference>
<dbReference type="InterPro" id="IPR041569">
    <property type="entry name" value="AAA_lid_3"/>
</dbReference>
<dbReference type="InterPro" id="IPR003959">
    <property type="entry name" value="ATPase_AAA_core"/>
</dbReference>
<dbReference type="InterPro" id="IPR003960">
    <property type="entry name" value="ATPase_AAA_CS"/>
</dbReference>
<dbReference type="InterPro" id="IPR005936">
    <property type="entry name" value="FtsH"/>
</dbReference>
<dbReference type="InterPro" id="IPR027417">
    <property type="entry name" value="P-loop_NTPase"/>
</dbReference>
<dbReference type="InterPro" id="IPR000642">
    <property type="entry name" value="Peptidase_M41"/>
</dbReference>
<dbReference type="InterPro" id="IPR037219">
    <property type="entry name" value="Peptidase_M41-like"/>
</dbReference>
<dbReference type="NCBIfam" id="TIGR01241">
    <property type="entry name" value="FtsH_fam"/>
    <property type="match status" value="1"/>
</dbReference>
<dbReference type="PANTHER" id="PTHR23076:SF97">
    <property type="entry name" value="ATP-DEPENDENT ZINC METALLOPROTEASE YME1L1"/>
    <property type="match status" value="1"/>
</dbReference>
<dbReference type="PANTHER" id="PTHR23076">
    <property type="entry name" value="METALLOPROTEASE M41 FTSH"/>
    <property type="match status" value="1"/>
</dbReference>
<dbReference type="Pfam" id="PF00004">
    <property type="entry name" value="AAA"/>
    <property type="match status" value="1"/>
</dbReference>
<dbReference type="Pfam" id="PF17862">
    <property type="entry name" value="AAA_lid_3"/>
    <property type="match status" value="1"/>
</dbReference>
<dbReference type="Pfam" id="PF01434">
    <property type="entry name" value="Peptidase_M41"/>
    <property type="match status" value="1"/>
</dbReference>
<dbReference type="SMART" id="SM00382">
    <property type="entry name" value="AAA"/>
    <property type="match status" value="1"/>
</dbReference>
<dbReference type="SUPFAM" id="SSF140990">
    <property type="entry name" value="FtsH protease domain-like"/>
    <property type="match status" value="1"/>
</dbReference>
<dbReference type="SUPFAM" id="SSF52540">
    <property type="entry name" value="P-loop containing nucleoside triphosphate hydrolases"/>
    <property type="match status" value="1"/>
</dbReference>
<dbReference type="PROSITE" id="PS00674">
    <property type="entry name" value="AAA"/>
    <property type="match status" value="1"/>
</dbReference>
<evidence type="ECO:0000255" key="1">
    <source>
        <dbReference type="HAMAP-Rule" id="MF_01458"/>
    </source>
</evidence>
<feature type="chain" id="PRO_0000400401" description="ATP-dependent zinc metalloprotease FtsH 1">
    <location>
        <begin position="1"/>
        <end position="594"/>
    </location>
</feature>
<feature type="topological domain" description="Cytoplasmic" evidence="1">
    <location>
        <begin position="1"/>
        <end position="2"/>
    </location>
</feature>
<feature type="transmembrane region" description="Helical" evidence="1">
    <location>
        <begin position="3"/>
        <end position="23"/>
    </location>
</feature>
<feature type="topological domain" description="Extracellular" evidence="1">
    <location>
        <begin position="24"/>
        <end position="92"/>
    </location>
</feature>
<feature type="transmembrane region" description="Helical" evidence="1">
    <location>
        <begin position="93"/>
        <end position="113"/>
    </location>
</feature>
<feature type="topological domain" description="Cytoplasmic" evidence="1">
    <location>
        <begin position="114"/>
        <end position="594"/>
    </location>
</feature>
<feature type="active site" evidence="1">
    <location>
        <position position="409"/>
    </location>
</feature>
<feature type="binding site" evidence="1">
    <location>
        <begin position="186"/>
        <end position="193"/>
    </location>
    <ligand>
        <name>ATP</name>
        <dbReference type="ChEBI" id="CHEBI:30616"/>
    </ligand>
</feature>
<feature type="binding site" evidence="1">
    <location>
        <position position="408"/>
    </location>
    <ligand>
        <name>Zn(2+)</name>
        <dbReference type="ChEBI" id="CHEBI:29105"/>
        <note>catalytic</note>
    </ligand>
</feature>
<feature type="binding site" evidence="1">
    <location>
        <position position="412"/>
    </location>
    <ligand>
        <name>Zn(2+)</name>
        <dbReference type="ChEBI" id="CHEBI:29105"/>
        <note>catalytic</note>
    </ligand>
</feature>
<feature type="binding site" evidence="1">
    <location>
        <position position="485"/>
    </location>
    <ligand>
        <name>Zn(2+)</name>
        <dbReference type="ChEBI" id="CHEBI:29105"/>
        <note>catalytic</note>
    </ligand>
</feature>
<organism>
    <name type="scientific">Symbiobacterium thermophilum (strain DSM 24528 / JCM 14929 / IAM 14863 / T)</name>
    <dbReference type="NCBI Taxonomy" id="292459"/>
    <lineage>
        <taxon>Bacteria</taxon>
        <taxon>Bacillati</taxon>
        <taxon>Bacillota</taxon>
        <taxon>Clostridia</taxon>
        <taxon>Eubacteriales</taxon>
        <taxon>Symbiobacteriaceae</taxon>
        <taxon>Symbiobacterium</taxon>
    </lineage>
</organism>
<protein>
    <recommendedName>
        <fullName evidence="1">ATP-dependent zinc metalloprotease FtsH 1</fullName>
        <ecNumber evidence="1">3.4.24.-</ecNumber>
    </recommendedName>
</protein>
<gene>
    <name evidence="1" type="primary">ftsH1</name>
    <name type="ordered locus">STH2541</name>
</gene>
<proteinExistence type="inferred from homology"/>
<reference key="1">
    <citation type="journal article" date="2004" name="Nucleic Acids Res.">
        <title>Genome sequence of Symbiobacterium thermophilum, an uncultivable bacterium that depends on microbial commensalism.</title>
        <authorList>
            <person name="Ueda K."/>
            <person name="Yamashita A."/>
            <person name="Ishikawa J."/>
            <person name="Shimada M."/>
            <person name="Watsuji T."/>
            <person name="Morimura K."/>
            <person name="Ikeda H."/>
            <person name="Hattori M."/>
            <person name="Beppu T."/>
        </authorList>
    </citation>
    <scope>NUCLEOTIDE SEQUENCE [LARGE SCALE GENOMIC DNA]</scope>
    <source>
        <strain>DSM 24528 / JCM 14929 / IAM 14863 / T</strain>
    </source>
</reference>
<accession>Q67LC0</accession>
<name>FTSH1_SYMTH</name>
<sequence length="594" mass="64245">MRWWAGAALLLAALLFGRPAAAMEAQPVAYSEFIQDVQARRVAYARITGQRLEAAYRDGTVRVVTLPPGEARLPLVLMQYGARVEFVRPADPIAFRTLLRFIPPLLILGAILWFTRRTAGGSGGLLTMEQSPARLYRVGEASVTLQDVAGLDEVKAELQEVIDFLREPERYRAMGARIPRGILLSGPPGTGKTLLARALAGEAGVPFFSASGSDFVELFAGTGAARVRALFDRARKAAPCIVFIDEIDALARRRGVGAGGGTEEREQTINQLLVEMDGFDSGEGVIVVAATNRPDVLDPAVLRPGRFDRHLTVDPPDRKGREQILAVHAREKRLSQAVALAEVARLTPGFTGADLANLLNEAALLAVRAGEREIGWPQVAMALERVTSGGPPRRVRAAAADRVRAAYHEAGHALAGLALRGSDRLVRVTILPHGRGLGHTLFRDQDEERYLHTRRDAFDRLTELLAGRAAEALVLGEVSAGAADDLERATGLAREMVTRWGMDADIGPLRLEHAVEGEESLRRADGAMRALVAAAERAARALLEARRSGLERLAAALLERERLEGPEVEALLELTPGEKPYIIVANSRGDEGNQ</sequence>
<keyword id="KW-0067">ATP-binding</keyword>
<keyword id="KW-1003">Cell membrane</keyword>
<keyword id="KW-0378">Hydrolase</keyword>
<keyword id="KW-0472">Membrane</keyword>
<keyword id="KW-0479">Metal-binding</keyword>
<keyword id="KW-0482">Metalloprotease</keyword>
<keyword id="KW-0547">Nucleotide-binding</keyword>
<keyword id="KW-0645">Protease</keyword>
<keyword id="KW-1185">Reference proteome</keyword>
<keyword id="KW-0812">Transmembrane</keyword>
<keyword id="KW-1133">Transmembrane helix</keyword>
<keyword id="KW-0862">Zinc</keyword>
<comment type="function">
    <text evidence="1">Acts as a processive, ATP-dependent zinc metallopeptidase for both cytoplasmic and membrane proteins. Plays a role in the quality control of integral membrane proteins.</text>
</comment>
<comment type="cofactor">
    <cofactor evidence="1">
        <name>Zn(2+)</name>
        <dbReference type="ChEBI" id="CHEBI:29105"/>
    </cofactor>
    <text evidence="1">Binds 1 zinc ion per subunit.</text>
</comment>
<comment type="subunit">
    <text evidence="1">Homohexamer.</text>
</comment>
<comment type="subcellular location">
    <subcellularLocation>
        <location evidence="1">Cell membrane</location>
        <topology evidence="1">Multi-pass membrane protein</topology>
        <orientation evidence="1">Cytoplasmic side</orientation>
    </subcellularLocation>
</comment>
<comment type="similarity">
    <text evidence="1">In the central section; belongs to the AAA ATPase family.</text>
</comment>
<comment type="similarity">
    <text evidence="1">In the C-terminal section; belongs to the peptidase M41 family.</text>
</comment>